<evidence type="ECO:0000250" key="1"/>
<evidence type="ECO:0000255" key="2"/>
<evidence type="ECO:0000305" key="3"/>
<organism>
    <name type="scientific">Arabidopsis thaliana</name>
    <name type="common">Mouse-ear cress</name>
    <dbReference type="NCBI Taxonomy" id="3702"/>
    <lineage>
        <taxon>Eukaryota</taxon>
        <taxon>Viridiplantae</taxon>
        <taxon>Streptophyta</taxon>
        <taxon>Embryophyta</taxon>
        <taxon>Tracheophyta</taxon>
        <taxon>Spermatophyta</taxon>
        <taxon>Magnoliopsida</taxon>
        <taxon>eudicotyledons</taxon>
        <taxon>Gunneridae</taxon>
        <taxon>Pentapetalae</taxon>
        <taxon>rosids</taxon>
        <taxon>malvids</taxon>
        <taxon>Brassicales</taxon>
        <taxon>Brassicaceae</taxon>
        <taxon>Camelineae</taxon>
        <taxon>Arabidopsis</taxon>
    </lineage>
</organism>
<protein>
    <recommendedName>
        <fullName>Defensin-like protein 308</fullName>
    </recommendedName>
</protein>
<gene>
    <name type="ordered locus">At5g46871</name>
    <name type="ORF">MSD23</name>
</gene>
<comment type="subcellular location">
    <subcellularLocation>
        <location evidence="1">Secreted</location>
    </subcellularLocation>
</comment>
<comment type="similarity">
    <text evidence="3">Belongs to the DEFL family.</text>
</comment>
<comment type="caution">
    <text evidence="3">Lacks 1 of the 4 disulfide bonds, which are conserved features of the family.</text>
</comment>
<sequence>MKTSAFFIAVLLILSCSSSMIMGVSYHENRCHDWVDCAIWCKQWVPQPKCINRVCDCKPKSLPTNDEIPKSASSSSKN</sequence>
<reference key="1">
    <citation type="journal article" date="2000" name="DNA Res.">
        <title>Structural analysis of Arabidopsis thaliana chromosome 5. X. Sequence features of the regions of 3,076,755 bp covered by sixty P1 and TAC clones.</title>
        <authorList>
            <person name="Sato S."/>
            <person name="Nakamura Y."/>
            <person name="Kaneko T."/>
            <person name="Katoh T."/>
            <person name="Asamizu E."/>
            <person name="Kotani H."/>
            <person name="Tabata S."/>
        </authorList>
    </citation>
    <scope>NUCLEOTIDE SEQUENCE [LARGE SCALE GENOMIC DNA]</scope>
    <source>
        <strain>cv. Columbia</strain>
    </source>
</reference>
<reference key="2">
    <citation type="journal article" date="2017" name="Plant J.">
        <title>Araport11: a complete reannotation of the Arabidopsis thaliana reference genome.</title>
        <authorList>
            <person name="Cheng C.Y."/>
            <person name="Krishnakumar V."/>
            <person name="Chan A.P."/>
            <person name="Thibaud-Nissen F."/>
            <person name="Schobel S."/>
            <person name="Town C.D."/>
        </authorList>
    </citation>
    <scope>GENOME REANNOTATION</scope>
    <source>
        <strain>cv. Columbia</strain>
    </source>
</reference>
<reference key="3">
    <citation type="journal article" date="2005" name="Plant Physiol.">
        <title>Genome organization of more than 300 defensin-like genes in Arabidopsis.</title>
        <authorList>
            <person name="Silverstein K.A.T."/>
            <person name="Graham M.A."/>
            <person name="Paape T.D."/>
            <person name="VandenBosch K.A."/>
        </authorList>
    </citation>
    <scope>NUCLEOTIDE SEQUENCE [MRNA] OF 17-78</scope>
    <scope>GENE FAMILY</scope>
</reference>
<feature type="signal peptide" evidence="2">
    <location>
        <begin position="1"/>
        <end position="19"/>
    </location>
</feature>
<feature type="chain" id="PRO_0000379765" description="Defensin-like protein 308">
    <location>
        <begin position="20"/>
        <end position="78"/>
    </location>
</feature>
<feature type="disulfide bond" evidence="1">
    <location>
        <begin position="31"/>
        <end position="50"/>
    </location>
</feature>
<feature type="disulfide bond" evidence="1">
    <location>
        <begin position="37"/>
        <end position="55"/>
    </location>
</feature>
<feature type="disulfide bond" evidence="1">
    <location>
        <begin position="41"/>
        <end position="57"/>
    </location>
</feature>
<proteinExistence type="inferred from homology"/>
<name>DF308_ARATH</name>
<dbReference type="EMBL" id="AB022221">
    <property type="status" value="NOT_ANNOTATED_CDS"/>
    <property type="molecule type" value="Genomic_DNA"/>
</dbReference>
<dbReference type="EMBL" id="CP002688">
    <property type="protein sequence ID" value="AED95439.1"/>
    <property type="molecule type" value="Genomic_DNA"/>
</dbReference>
<dbReference type="EMBL" id="AY803258">
    <property type="protein sequence ID" value="AAX39299.1"/>
    <property type="molecule type" value="mRNA"/>
</dbReference>
<dbReference type="RefSeq" id="NP_001032020.1">
    <property type="nucleotide sequence ID" value="NM_001036943.2"/>
</dbReference>
<dbReference type="SMR" id="Q4VP04"/>
<dbReference type="STRING" id="3702.Q4VP04"/>
<dbReference type="iPTMnet" id="Q4VP04"/>
<dbReference type="PaxDb" id="3702-AT5G46871.1"/>
<dbReference type="ProteomicsDB" id="224236"/>
<dbReference type="EnsemblPlants" id="AT5G46871.1">
    <property type="protein sequence ID" value="AT5G46871.1"/>
    <property type="gene ID" value="AT5G46871"/>
</dbReference>
<dbReference type="GeneID" id="3771453"/>
<dbReference type="Gramene" id="AT5G46871.1">
    <property type="protein sequence ID" value="AT5G46871.1"/>
    <property type="gene ID" value="AT5G46871"/>
</dbReference>
<dbReference type="KEGG" id="ath:AT5G46871"/>
<dbReference type="Araport" id="AT5G46871"/>
<dbReference type="TAIR" id="AT5G46871"/>
<dbReference type="HOGENOM" id="CLU_2625370_0_0_1"/>
<dbReference type="InParanoid" id="Q4VP04"/>
<dbReference type="OMA" id="HENRCHD"/>
<dbReference type="OrthoDB" id="1058091at2759"/>
<dbReference type="PhylomeDB" id="Q4VP04"/>
<dbReference type="PRO" id="PR:Q4VP04"/>
<dbReference type="Proteomes" id="UP000006548">
    <property type="component" value="Chromosome 5"/>
</dbReference>
<dbReference type="ExpressionAtlas" id="Q4VP04">
    <property type="expression patterns" value="baseline and differential"/>
</dbReference>
<dbReference type="GO" id="GO:0005576">
    <property type="term" value="C:extracellular region"/>
    <property type="evidence" value="ECO:0007669"/>
    <property type="project" value="UniProtKB-SubCell"/>
</dbReference>
<dbReference type="GO" id="GO:0050832">
    <property type="term" value="P:defense response to fungus"/>
    <property type="evidence" value="ECO:0007669"/>
    <property type="project" value="UniProtKB-KW"/>
</dbReference>
<dbReference type="GO" id="GO:0031640">
    <property type="term" value="P:killing of cells of another organism"/>
    <property type="evidence" value="ECO:0007669"/>
    <property type="project" value="UniProtKB-KW"/>
</dbReference>
<keyword id="KW-0929">Antimicrobial</keyword>
<keyword id="KW-1015">Disulfide bond</keyword>
<keyword id="KW-0295">Fungicide</keyword>
<keyword id="KW-0611">Plant defense</keyword>
<keyword id="KW-1185">Reference proteome</keyword>
<keyword id="KW-0964">Secreted</keyword>
<keyword id="KW-0732">Signal</keyword>
<accession>Q4VP04</accession>